<sequence length="62" mass="7020">MKSTLMTASLLILVLLSIVDYASVYAELIDSEISMERQWINACFNICMKISSDQKYCKSFCG</sequence>
<organism>
    <name type="scientific">Heterometrus petersii</name>
    <name type="common">Asian forest scorpion</name>
    <dbReference type="NCBI Taxonomy" id="754296"/>
    <lineage>
        <taxon>Eukaryota</taxon>
        <taxon>Metazoa</taxon>
        <taxon>Ecdysozoa</taxon>
        <taxon>Arthropoda</taxon>
        <taxon>Chelicerata</taxon>
        <taxon>Arachnida</taxon>
        <taxon>Scorpiones</taxon>
        <taxon>Iurida</taxon>
        <taxon>Scorpionoidea</taxon>
        <taxon>Scorpionidae</taxon>
        <taxon>Heterometrinae</taxon>
        <taxon>Heterometrus</taxon>
    </lineage>
</organism>
<feature type="signal peptide" evidence="3">
    <location>
        <begin position="1"/>
        <end position="26"/>
    </location>
</feature>
<feature type="propeptide" id="PRO_0000416806" evidence="1">
    <location>
        <begin position="27"/>
        <end position="36"/>
    </location>
</feature>
<feature type="peptide" id="PRO_0000416807" description="Potassium channel toxin kappa-KTx 3.3">
    <location>
        <begin position="38"/>
        <end position="62"/>
    </location>
</feature>
<feature type="disulfide bond" evidence="2">
    <location>
        <begin position="43"/>
        <end position="61"/>
    </location>
</feature>
<feature type="disulfide bond" evidence="2">
    <location>
        <begin position="47"/>
        <end position="57"/>
    </location>
</feature>
<accession>P0DJ38</accession>
<reference key="1">
    <citation type="journal article" date="2010" name="Proteomics">
        <title>Molecular diversity of toxic components from the scorpion Heterometrus petersii venom revealed by proteomic and transcriptome analysis.</title>
        <authorList>
            <person name="Ma Y."/>
            <person name="Zhao Y."/>
            <person name="Zhao R."/>
            <person name="Zhang W."/>
            <person name="He Y."/>
            <person name="Wu Y."/>
            <person name="Cao Z."/>
            <person name="Guo L."/>
            <person name="Li W."/>
        </authorList>
    </citation>
    <scope>NUCLEOTIDE SEQUENCE [MRNA]</scope>
    <source>
        <tissue>Venom gland</tissue>
    </source>
</reference>
<reference key="2">
    <citation type="journal article" date="2012" name="Biochem. Pharmacol.">
        <title>Purification, molecular cloning and functional characterization of HelaTx1 (Heterometrus laoticus): the first member of a new kappa-KTX subfamily.</title>
        <authorList>
            <person name="Vandendriessche T."/>
            <person name="Kopljar I."/>
            <person name="Jenkins D.P."/>
            <person name="Diego-Garcia E."/>
            <person name="Abdel-Mottaleb Y."/>
            <person name="Vermassen E."/>
            <person name="Clynen E."/>
            <person name="Schoofs L."/>
            <person name="Wulff H."/>
            <person name="Snyders D."/>
            <person name="Tytgat J."/>
        </authorList>
    </citation>
    <scope>NOMENCLATURE</scope>
</reference>
<name>KKX33_HETPE</name>
<keyword id="KW-1015">Disulfide bond</keyword>
<keyword id="KW-0872">Ion channel impairing toxin</keyword>
<keyword id="KW-0528">Neurotoxin</keyword>
<keyword id="KW-0632">Potassium channel impairing toxin</keyword>
<keyword id="KW-0964">Secreted</keyword>
<keyword id="KW-0732">Signal</keyword>
<keyword id="KW-0800">Toxin</keyword>
<keyword id="KW-1220">Voltage-gated potassium channel impairing toxin</keyword>
<protein>
    <recommendedName>
        <fullName evidence="5">Potassium channel toxin kappa-KTx 3.3</fullName>
    </recommendedName>
    <alternativeName>
        <fullName evidence="4">HSP040C.4</fullName>
    </alternativeName>
</protein>
<evidence type="ECO:0000250" key="1"/>
<evidence type="ECO:0000250" key="2">
    <source>
        <dbReference type="UniProtKB" id="P82850"/>
    </source>
</evidence>
<evidence type="ECO:0000255" key="3"/>
<evidence type="ECO:0000303" key="4">
    <source>
    </source>
</evidence>
<evidence type="ECO:0000303" key="5">
    <source>
    </source>
</evidence>
<evidence type="ECO:0000305" key="6"/>
<comment type="function">
    <text evidence="1">Potassium channel inhibitor (Kv).</text>
</comment>
<comment type="subcellular location">
    <subcellularLocation>
        <location evidence="1">Secreted</location>
    </subcellularLocation>
</comment>
<comment type="tissue specificity">
    <text evidence="6">Expressed by the venom gland.</text>
</comment>
<comment type="domain">
    <text evidence="2">Has the structural arrangement of two alpha-helices stabilized by disulfide bonds (CSalpha/alpha 2(S-S)).</text>
</comment>
<comment type="similarity">
    <text evidence="6">Belongs to the short scorpion toxin superfamily. Potassium channel inhibitor kappa-KTx family. Kappa-KTx 3 subfamily.</text>
</comment>
<dbReference type="SMR" id="P0DJ38"/>
<dbReference type="GO" id="GO:0005576">
    <property type="term" value="C:extracellular region"/>
    <property type="evidence" value="ECO:0007669"/>
    <property type="project" value="UniProtKB-SubCell"/>
</dbReference>
<dbReference type="GO" id="GO:0015459">
    <property type="term" value="F:potassium channel regulator activity"/>
    <property type="evidence" value="ECO:0007669"/>
    <property type="project" value="UniProtKB-KW"/>
</dbReference>
<dbReference type="GO" id="GO:0090729">
    <property type="term" value="F:toxin activity"/>
    <property type="evidence" value="ECO:0007669"/>
    <property type="project" value="UniProtKB-KW"/>
</dbReference>
<proteinExistence type="inferred from homology"/>